<organism>
    <name type="scientific">Prochlorothrix hollandica</name>
    <dbReference type="NCBI Taxonomy" id="1223"/>
    <lineage>
        <taxon>Bacteria</taxon>
        <taxon>Bacillati</taxon>
        <taxon>Cyanobacteriota</taxon>
        <taxon>Cyanophyceae</taxon>
        <taxon>Prochlorotrichales</taxon>
        <taxon>Prochlorotrichaceae</taxon>
        <taxon>Prochlorothrix</taxon>
    </lineage>
</organism>
<accession>P51766</accession>
<name>PSBD_PROHO</name>
<dbReference type="EC" id="1.10.3.9" evidence="1"/>
<dbReference type="EMBL" id="U40144">
    <property type="protein sequence ID" value="AAA82944.1"/>
    <property type="molecule type" value="Genomic_DNA"/>
</dbReference>
<dbReference type="SMR" id="P51766"/>
<dbReference type="GO" id="GO:0009523">
    <property type="term" value="C:photosystem II"/>
    <property type="evidence" value="ECO:0007669"/>
    <property type="project" value="UniProtKB-KW"/>
</dbReference>
<dbReference type="GO" id="GO:0031676">
    <property type="term" value="C:plasma membrane-derived thylakoid membrane"/>
    <property type="evidence" value="ECO:0007669"/>
    <property type="project" value="UniProtKB-SubCell"/>
</dbReference>
<dbReference type="GO" id="GO:0016168">
    <property type="term" value="F:chlorophyll binding"/>
    <property type="evidence" value="ECO:0007669"/>
    <property type="project" value="UniProtKB-UniRule"/>
</dbReference>
<dbReference type="GO" id="GO:0045156">
    <property type="term" value="F:electron transporter, transferring electrons within the cyclic electron transport pathway of photosynthesis activity"/>
    <property type="evidence" value="ECO:0007669"/>
    <property type="project" value="InterPro"/>
</dbReference>
<dbReference type="GO" id="GO:0005506">
    <property type="term" value="F:iron ion binding"/>
    <property type="evidence" value="ECO:0007669"/>
    <property type="project" value="UniProtKB-UniRule"/>
</dbReference>
<dbReference type="GO" id="GO:0010242">
    <property type="term" value="F:oxygen evolving activity"/>
    <property type="evidence" value="ECO:0007669"/>
    <property type="project" value="UniProtKB-EC"/>
</dbReference>
<dbReference type="GO" id="GO:0009772">
    <property type="term" value="P:photosynthetic electron transport in photosystem II"/>
    <property type="evidence" value="ECO:0007669"/>
    <property type="project" value="InterPro"/>
</dbReference>
<dbReference type="FunFam" id="1.20.85.10:FF:000001">
    <property type="entry name" value="photosystem II D2 protein-like"/>
    <property type="match status" value="1"/>
</dbReference>
<dbReference type="Gene3D" id="1.20.85.10">
    <property type="entry name" value="Photosystem II protein D1-like"/>
    <property type="match status" value="1"/>
</dbReference>
<dbReference type="HAMAP" id="MF_01383">
    <property type="entry name" value="PSII_PsbD_D2"/>
    <property type="match status" value="1"/>
</dbReference>
<dbReference type="InterPro" id="IPR055266">
    <property type="entry name" value="D1/D2"/>
</dbReference>
<dbReference type="InterPro" id="IPR036854">
    <property type="entry name" value="Photo_II_D1/D2_sf"/>
</dbReference>
<dbReference type="InterPro" id="IPR000484">
    <property type="entry name" value="Photo_RC_L/M"/>
</dbReference>
<dbReference type="InterPro" id="IPR055265">
    <property type="entry name" value="Photo_RC_L/M_CS"/>
</dbReference>
<dbReference type="InterPro" id="IPR005868">
    <property type="entry name" value="PSII_PsbD/D2"/>
</dbReference>
<dbReference type="NCBIfam" id="TIGR01152">
    <property type="entry name" value="psbD"/>
    <property type="match status" value="1"/>
</dbReference>
<dbReference type="PANTHER" id="PTHR33149:SF12">
    <property type="entry name" value="PHOTOSYSTEM II D2 PROTEIN"/>
    <property type="match status" value="1"/>
</dbReference>
<dbReference type="PANTHER" id="PTHR33149">
    <property type="entry name" value="PHOTOSYSTEM II PROTEIN D1"/>
    <property type="match status" value="1"/>
</dbReference>
<dbReference type="Pfam" id="PF00124">
    <property type="entry name" value="Photo_RC"/>
    <property type="match status" value="1"/>
</dbReference>
<dbReference type="PRINTS" id="PR00256">
    <property type="entry name" value="REACTNCENTRE"/>
</dbReference>
<dbReference type="SUPFAM" id="SSF81483">
    <property type="entry name" value="Bacterial photosystem II reaction centre, L and M subunits"/>
    <property type="match status" value="1"/>
</dbReference>
<dbReference type="PROSITE" id="PS00244">
    <property type="entry name" value="REACTION_CENTER"/>
    <property type="match status" value="1"/>
</dbReference>
<sequence length="351" mass="39329">MTTAVGRISDRGWFDVLDDWLKRDRFVFVGWSGLLLFPCAYMAIGGWLTGTTFATSWYTHGIASSYLEGCNFLTVAISTPADSMGHALLLLWGPEAQGAFVRWVQLGGLWTFTALHGAFALIGFMLRQFEIARLVGVRPYNAIAFSAPIALFVSVFLIYPLGQSSWFFAPSFGVAAIFRFILFFQGFHNWTLNPFHMMGVAGVLGGALLCAIHGATVENTLFEDGDDATTFRGFEPTQSEETYSMVTANRFWSQIFGIAFSNKRWLHFFMLFVPVMGLWMSAIGVVGLALNLRSYDFVSQEIRAAEDPEFETFYTKNILLNEGLRAWMAPQDQPHENFIFPEEVLPRGNAL</sequence>
<comment type="function">
    <text evidence="1">Photosystem II (PSII) is a light-driven water:plastoquinone oxidoreductase that uses light energy to abstract electrons from H(2)O, generating O(2) and a proton gradient subsequently used for ATP formation. It consists of a core antenna complex that captures photons, and an electron transfer chain that converts photonic excitation into a charge separation. The D1/D2 (PsbA/PsbD) reaction center heterodimer binds P680, the primary electron donor of PSII as well as several subsequent electron acceptors. D2 is needed for assembly of a stable PSII complex.</text>
</comment>
<comment type="catalytic activity">
    <reaction evidence="1">
        <text>2 a plastoquinone + 4 hnu + 2 H2O = 2 a plastoquinol + O2</text>
        <dbReference type="Rhea" id="RHEA:36359"/>
        <dbReference type="Rhea" id="RHEA-COMP:9561"/>
        <dbReference type="Rhea" id="RHEA-COMP:9562"/>
        <dbReference type="ChEBI" id="CHEBI:15377"/>
        <dbReference type="ChEBI" id="CHEBI:15379"/>
        <dbReference type="ChEBI" id="CHEBI:17757"/>
        <dbReference type="ChEBI" id="CHEBI:30212"/>
        <dbReference type="ChEBI" id="CHEBI:62192"/>
        <dbReference type="EC" id="1.10.3.9"/>
    </reaction>
</comment>
<comment type="cofactor">
    <text evidence="1">The D1/D2 heterodimer binds P680, chlorophylls that are the primary electron donor of PSII, and subsequent electron acceptors. It shares a non-heme iron and each subunit binds pheophytin, quinone, additional chlorophylls, carotenoids and lipids. There is also a Cl(-1) ion associated with D1 and D2, which is required for oxygen evolution. The PSII complex binds additional chlorophylls, carotenoids and specific lipids.</text>
</comment>
<comment type="subunit">
    <text evidence="1">PSII is composed of 1 copy each of membrane proteins PsbA, PsbB, PsbC, PsbD, PsbE, PsbF, PsbH, PsbI, PsbJ, PsbK, PsbL, PsbM, PsbT, PsbX, PsbY, PsbZ, Psb30/Ycf12, peripheral proteins PsbO, CyanoQ (PsbQ), PsbU, PsbV and a large number of cofactors. It forms dimeric complexes.</text>
</comment>
<comment type="subcellular location">
    <subcellularLocation>
        <location evidence="1">Cellular thylakoid membrane</location>
        <topology evidence="1">Multi-pass membrane protein</topology>
    </subcellularLocation>
</comment>
<comment type="miscellaneous">
    <text evidence="1">2 of the reaction center chlorophylls (ChlD1 and ChlD2) are entirely coordinated by water.</text>
</comment>
<comment type="similarity">
    <text evidence="1">Belongs to the reaction center PufL/M/PsbA/D family.</text>
</comment>
<evidence type="ECO:0000255" key="1">
    <source>
        <dbReference type="HAMAP-Rule" id="MF_01383"/>
    </source>
</evidence>
<protein>
    <recommendedName>
        <fullName evidence="1">Photosystem II D2 protein</fullName>
        <shortName evidence="1">PSII D2 protein</shortName>
        <ecNumber evidence="1">1.10.3.9</ecNumber>
    </recommendedName>
    <alternativeName>
        <fullName evidence="1">Photosystem Q(A) protein</fullName>
    </alternativeName>
</protein>
<proteinExistence type="inferred from homology"/>
<reference key="1">
    <citation type="submission" date="1995-11" db="EMBL/GenBank/DDBJ databases">
        <authorList>
            <person name="Nalty M.S."/>
            <person name="Sharp M."/>
            <person name="Mor T."/>
            <person name="Golden S.S."/>
        </authorList>
    </citation>
    <scope>NUCLEOTIDE SEQUENCE [GENOMIC DNA]</scope>
</reference>
<gene>
    <name evidence="1" type="primary">psbD</name>
    <name type="synonym">psbD-I</name>
</gene>
<keyword id="KW-0148">Chlorophyll</keyword>
<keyword id="KW-0157">Chromophore</keyword>
<keyword id="KW-0249">Electron transport</keyword>
<keyword id="KW-0408">Iron</keyword>
<keyword id="KW-0460">Magnesium</keyword>
<keyword id="KW-0472">Membrane</keyword>
<keyword id="KW-0479">Metal-binding</keyword>
<keyword id="KW-0560">Oxidoreductase</keyword>
<keyword id="KW-0602">Photosynthesis</keyword>
<keyword id="KW-0604">Photosystem II</keyword>
<keyword id="KW-0793">Thylakoid</keyword>
<keyword id="KW-0812">Transmembrane</keyword>
<keyword id="KW-1133">Transmembrane helix</keyword>
<keyword id="KW-0813">Transport</keyword>
<feature type="chain" id="PRO_0000090524" description="Photosystem II D2 protein">
    <location>
        <begin position="1"/>
        <end position="351"/>
    </location>
</feature>
<feature type="transmembrane region" description="Helical" evidence="1">
    <location>
        <begin position="39"/>
        <end position="59"/>
    </location>
</feature>
<feature type="transmembrane region" description="Helical" evidence="1">
    <location>
        <begin position="123"/>
        <end position="139"/>
    </location>
</feature>
<feature type="transmembrane region" description="Helical" evidence="1">
    <location>
        <begin position="151"/>
        <end position="164"/>
    </location>
</feature>
<feature type="transmembrane region" description="Helical" evidence="1">
    <location>
        <begin position="206"/>
        <end position="226"/>
    </location>
</feature>
<feature type="transmembrane region" description="Helical" evidence="1">
    <location>
        <begin position="277"/>
        <end position="293"/>
    </location>
</feature>
<feature type="binding site" description="axial binding residue" evidence="1">
    <location>
        <position position="116"/>
    </location>
    <ligand>
        <name>chlorophyll a</name>
        <dbReference type="ChEBI" id="CHEBI:58416"/>
        <label>ChlzD2</label>
    </ligand>
    <ligandPart>
        <name>Mg</name>
        <dbReference type="ChEBI" id="CHEBI:25107"/>
    </ligandPart>
</feature>
<feature type="binding site" evidence="1">
    <location>
        <position position="128"/>
    </location>
    <ligand>
        <name>pheophytin a</name>
        <dbReference type="ChEBI" id="CHEBI:136840"/>
        <label>D2</label>
    </ligand>
</feature>
<feature type="binding site" evidence="1">
    <location>
        <position position="141"/>
    </location>
    <ligand>
        <name>pheophytin a</name>
        <dbReference type="ChEBI" id="CHEBI:136840"/>
        <label>D2</label>
    </ligand>
</feature>
<feature type="binding site" description="axial binding residue" evidence="1">
    <location>
        <position position="196"/>
    </location>
    <ligand>
        <name>chlorophyll a</name>
        <dbReference type="ChEBI" id="CHEBI:58416"/>
        <label>PD2</label>
    </ligand>
    <ligandPart>
        <name>Mg</name>
        <dbReference type="ChEBI" id="CHEBI:25107"/>
    </ligandPart>
</feature>
<feature type="binding site" evidence="1">
    <location>
        <position position="213"/>
    </location>
    <ligand>
        <name>a plastoquinone</name>
        <dbReference type="ChEBI" id="CHEBI:17757"/>
        <label>Q(A)</label>
    </ligand>
</feature>
<feature type="binding site" evidence="1">
    <location>
        <position position="213"/>
    </location>
    <ligand>
        <name>Fe cation</name>
        <dbReference type="ChEBI" id="CHEBI:24875"/>
        <note>ligand shared with heterodimeric partner</note>
    </ligand>
</feature>
<feature type="binding site" evidence="1">
    <location>
        <position position="260"/>
    </location>
    <ligand>
        <name>a plastoquinone</name>
        <dbReference type="ChEBI" id="CHEBI:17757"/>
        <label>Q(A)</label>
    </ligand>
</feature>
<feature type="binding site" evidence="1">
    <location>
        <position position="267"/>
    </location>
    <ligand>
        <name>Fe cation</name>
        <dbReference type="ChEBI" id="CHEBI:24875"/>
        <note>ligand shared with heterodimeric partner</note>
    </ligand>
</feature>